<gene>
    <name type="ordered locus">Shal_0858</name>
</gene>
<protein>
    <recommendedName>
        <fullName evidence="1">tRNA1(Val) (adenine(37)-N6)-methyltransferase</fullName>
        <ecNumber evidence="1">2.1.1.223</ecNumber>
    </recommendedName>
    <alternativeName>
        <fullName evidence="1">tRNA m6A37 methyltransferase</fullName>
    </alternativeName>
</protein>
<evidence type="ECO:0000255" key="1">
    <source>
        <dbReference type="HAMAP-Rule" id="MF_01872"/>
    </source>
</evidence>
<proteinExistence type="inferred from homology"/>
<sequence>MPFTFKLFHVDDSRCGMPVSTDGVLLGAWAPLVQAKTILDIGAGSGLLSLMAAQRSQAKITAIELDNDAALDCQQNFDASHWSERLEIICCDIQAYCQREQARQFDHIICNPPYFANGPQSSKFSRATARHTDSLSFDALLQAIKQLLAPEGQASLILPTESVSLLEAILSTYNLRLCHKLLAASVEGKAPNRQILVLGHDLKAKKIHNFGTELQAVAQQQLYIREKTGHYSLAFTLLSQDFYLKL</sequence>
<reference key="1">
    <citation type="submission" date="2008-01" db="EMBL/GenBank/DDBJ databases">
        <title>Complete sequence of Shewanella halifaxensis HAW-EB4.</title>
        <authorList>
            <consortium name="US DOE Joint Genome Institute"/>
            <person name="Copeland A."/>
            <person name="Lucas S."/>
            <person name="Lapidus A."/>
            <person name="Glavina del Rio T."/>
            <person name="Dalin E."/>
            <person name="Tice H."/>
            <person name="Bruce D."/>
            <person name="Goodwin L."/>
            <person name="Pitluck S."/>
            <person name="Sims D."/>
            <person name="Brettin T."/>
            <person name="Detter J.C."/>
            <person name="Han C."/>
            <person name="Kuske C.R."/>
            <person name="Schmutz J."/>
            <person name="Larimer F."/>
            <person name="Land M."/>
            <person name="Hauser L."/>
            <person name="Kyrpides N."/>
            <person name="Kim E."/>
            <person name="Zhao J.-S."/>
            <person name="Richardson P."/>
        </authorList>
    </citation>
    <scope>NUCLEOTIDE SEQUENCE [LARGE SCALE GENOMIC DNA]</scope>
    <source>
        <strain>HAW-EB4</strain>
    </source>
</reference>
<accession>B0TUD3</accession>
<name>TRMN6_SHEHH</name>
<keyword id="KW-0963">Cytoplasm</keyword>
<keyword id="KW-0489">Methyltransferase</keyword>
<keyword id="KW-0949">S-adenosyl-L-methionine</keyword>
<keyword id="KW-0808">Transferase</keyword>
<keyword id="KW-0819">tRNA processing</keyword>
<dbReference type="EC" id="2.1.1.223" evidence="1"/>
<dbReference type="EMBL" id="CP000931">
    <property type="protein sequence ID" value="ABZ75433.1"/>
    <property type="molecule type" value="Genomic_DNA"/>
</dbReference>
<dbReference type="RefSeq" id="WP_012275985.1">
    <property type="nucleotide sequence ID" value="NC_010334.1"/>
</dbReference>
<dbReference type="SMR" id="B0TUD3"/>
<dbReference type="STRING" id="458817.Shal_0858"/>
<dbReference type="KEGG" id="shl:Shal_0858"/>
<dbReference type="eggNOG" id="COG4123">
    <property type="taxonomic scope" value="Bacteria"/>
</dbReference>
<dbReference type="HOGENOM" id="CLU_061983_0_0_6"/>
<dbReference type="OrthoDB" id="5383291at2"/>
<dbReference type="Proteomes" id="UP000001317">
    <property type="component" value="Chromosome"/>
</dbReference>
<dbReference type="GO" id="GO:0005737">
    <property type="term" value="C:cytoplasm"/>
    <property type="evidence" value="ECO:0007669"/>
    <property type="project" value="UniProtKB-SubCell"/>
</dbReference>
<dbReference type="GO" id="GO:0003676">
    <property type="term" value="F:nucleic acid binding"/>
    <property type="evidence" value="ECO:0007669"/>
    <property type="project" value="InterPro"/>
</dbReference>
<dbReference type="GO" id="GO:0000179">
    <property type="term" value="F:rRNA (adenine-N6,N6-)-dimethyltransferase activity"/>
    <property type="evidence" value="ECO:0007669"/>
    <property type="project" value="InterPro"/>
</dbReference>
<dbReference type="GO" id="GO:0016430">
    <property type="term" value="F:tRNA (adenine-N6)-methyltransferase activity"/>
    <property type="evidence" value="ECO:0007669"/>
    <property type="project" value="UniProtKB-UniRule"/>
</dbReference>
<dbReference type="GO" id="GO:0008033">
    <property type="term" value="P:tRNA processing"/>
    <property type="evidence" value="ECO:0007669"/>
    <property type="project" value="UniProtKB-UniRule"/>
</dbReference>
<dbReference type="CDD" id="cd02440">
    <property type="entry name" value="AdoMet_MTases"/>
    <property type="match status" value="1"/>
</dbReference>
<dbReference type="Gene3D" id="3.40.50.150">
    <property type="entry name" value="Vaccinia Virus protein VP39"/>
    <property type="match status" value="1"/>
</dbReference>
<dbReference type="HAMAP" id="MF_01872">
    <property type="entry name" value="tRNA_methyltr_YfiC"/>
    <property type="match status" value="1"/>
</dbReference>
<dbReference type="InterPro" id="IPR002052">
    <property type="entry name" value="DNA_methylase_N6_adenine_CS"/>
</dbReference>
<dbReference type="InterPro" id="IPR020596">
    <property type="entry name" value="rRNA_Ade_Mease_Trfase_CS"/>
</dbReference>
<dbReference type="InterPro" id="IPR029063">
    <property type="entry name" value="SAM-dependent_MTases_sf"/>
</dbReference>
<dbReference type="InterPro" id="IPR007848">
    <property type="entry name" value="Small_mtfrase_dom"/>
</dbReference>
<dbReference type="InterPro" id="IPR050210">
    <property type="entry name" value="tRNA_Adenine-N(6)_MTase"/>
</dbReference>
<dbReference type="InterPro" id="IPR022882">
    <property type="entry name" value="tRNA_adenine-N6_MeTrfase"/>
</dbReference>
<dbReference type="PANTHER" id="PTHR47739">
    <property type="entry name" value="TRNA1(VAL) (ADENINE(37)-N6)-METHYLTRANSFERASE"/>
    <property type="match status" value="1"/>
</dbReference>
<dbReference type="PANTHER" id="PTHR47739:SF1">
    <property type="entry name" value="TRNA1(VAL) (ADENINE(37)-N6)-METHYLTRANSFERASE"/>
    <property type="match status" value="1"/>
</dbReference>
<dbReference type="Pfam" id="PF05175">
    <property type="entry name" value="MTS"/>
    <property type="match status" value="1"/>
</dbReference>
<dbReference type="PRINTS" id="PR00507">
    <property type="entry name" value="N12N6MTFRASE"/>
</dbReference>
<dbReference type="SUPFAM" id="SSF53335">
    <property type="entry name" value="S-adenosyl-L-methionine-dependent methyltransferases"/>
    <property type="match status" value="1"/>
</dbReference>
<dbReference type="PROSITE" id="PS00092">
    <property type="entry name" value="N6_MTASE"/>
    <property type="match status" value="1"/>
</dbReference>
<comment type="function">
    <text evidence="1">Specifically methylates the adenine in position 37 of tRNA(1)(Val) (anticodon cmo5UAC).</text>
</comment>
<comment type="catalytic activity">
    <reaction evidence="1">
        <text>adenosine(37) in tRNA1(Val) + S-adenosyl-L-methionine = N(6)-methyladenosine(37) in tRNA1(Val) + S-adenosyl-L-homocysteine + H(+)</text>
        <dbReference type="Rhea" id="RHEA:43160"/>
        <dbReference type="Rhea" id="RHEA-COMP:10369"/>
        <dbReference type="Rhea" id="RHEA-COMP:10370"/>
        <dbReference type="ChEBI" id="CHEBI:15378"/>
        <dbReference type="ChEBI" id="CHEBI:57856"/>
        <dbReference type="ChEBI" id="CHEBI:59789"/>
        <dbReference type="ChEBI" id="CHEBI:74411"/>
        <dbReference type="ChEBI" id="CHEBI:74449"/>
        <dbReference type="EC" id="2.1.1.223"/>
    </reaction>
</comment>
<comment type="subcellular location">
    <subcellularLocation>
        <location evidence="1">Cytoplasm</location>
    </subcellularLocation>
</comment>
<comment type="similarity">
    <text evidence="1">Belongs to the methyltransferase superfamily. tRNA (adenine-N(6)-)-methyltransferase family.</text>
</comment>
<feature type="chain" id="PRO_0000387421" description="tRNA1(Val) (adenine(37)-N6)-methyltransferase">
    <location>
        <begin position="1"/>
        <end position="246"/>
    </location>
</feature>
<organism>
    <name type="scientific">Shewanella halifaxensis (strain HAW-EB4)</name>
    <dbReference type="NCBI Taxonomy" id="458817"/>
    <lineage>
        <taxon>Bacteria</taxon>
        <taxon>Pseudomonadati</taxon>
        <taxon>Pseudomonadota</taxon>
        <taxon>Gammaproteobacteria</taxon>
        <taxon>Alteromonadales</taxon>
        <taxon>Shewanellaceae</taxon>
        <taxon>Shewanella</taxon>
    </lineage>
</organism>